<name>IF2_ACTSZ</name>
<sequence>MTEKEQNAENAPKKLSLKRREKTTVSATTAGGKAKAVQVEVRKSRKIDTEAAIKAAEAAKLKAQEEAEAKAKAEAEKAEQEKATAAKVREKAAKPTKAEAKPENSTVAKAADPEKEKRKAEEAELRRKADELARQKAEEQARKAAEDAKRYAEAAKDTVEHHNDSDDFSDYHLTSSYAREAEDEDNRRRENHIRTGKNKVTKAKKGGRDDNGSKDERSADRRNQKDMRGKGKQSKQGKRGSTLQQAFTKPAQVTKSDVVIGETITVAELANKMAIKATEIIKTMMKMGEMVTINQVLDQETAQLVAEELGHKVILRKENELEESVLEDRDVNAEKVQRAPVVTIMGHVDHGKTSLLDYIRKAKVAAGEAGGITQHIGAYHVETKGKIITFLDTPGHAAFTSMRARGAKATDIVVLVVAADDGVMPQTIEAIQHARAAGVPIVVAVNKIDKPEANPERVEQELLQYDVVAEKFGGDVQFVYVSAKKGSGVDDLLDAILLQSEVLELTAVKDGMASGVVIESYLDKGRGPVATILVQSGTLKRGDIVLCGFEFGRVRAMRDEDGKDINEAGPSIPVEVLGLSGVPAAGDEATVVRDEKKAREVALYRQGKFREVKLARQQKAKLENMFSNMSEGDVAELNVIVKADVQGSVEAIVQSLQELSTEEVKVKVVGSGVGGITETDATLAAASNAIMVGFNVRADASARRVIENENIDLRYYSIIYELLNEIKAAMSGMLQPEFKQEIIGLAEVRDIFRHPKFGAIAGCMVTEGIVKRNNPIRVLRDNVVIFEGELESLRRFKDDVNEVRNGMECGIGVKNYNDVKVGDQIEVFEVVEVKRSI</sequence>
<dbReference type="EMBL" id="CP000746">
    <property type="protein sequence ID" value="ABR74487.1"/>
    <property type="molecule type" value="Genomic_DNA"/>
</dbReference>
<dbReference type="RefSeq" id="WP_012072864.1">
    <property type="nucleotide sequence ID" value="NC_009655.1"/>
</dbReference>
<dbReference type="SMR" id="A6VNE0"/>
<dbReference type="STRING" id="339671.Asuc_1121"/>
<dbReference type="KEGG" id="asu:Asuc_1121"/>
<dbReference type="eggNOG" id="COG0532">
    <property type="taxonomic scope" value="Bacteria"/>
</dbReference>
<dbReference type="HOGENOM" id="CLU_006301_6_3_6"/>
<dbReference type="OrthoDB" id="9811804at2"/>
<dbReference type="Proteomes" id="UP000001114">
    <property type="component" value="Chromosome"/>
</dbReference>
<dbReference type="GO" id="GO:0005829">
    <property type="term" value="C:cytosol"/>
    <property type="evidence" value="ECO:0007669"/>
    <property type="project" value="TreeGrafter"/>
</dbReference>
<dbReference type="GO" id="GO:0005525">
    <property type="term" value="F:GTP binding"/>
    <property type="evidence" value="ECO:0007669"/>
    <property type="project" value="UniProtKB-KW"/>
</dbReference>
<dbReference type="GO" id="GO:0003924">
    <property type="term" value="F:GTPase activity"/>
    <property type="evidence" value="ECO:0007669"/>
    <property type="project" value="UniProtKB-UniRule"/>
</dbReference>
<dbReference type="GO" id="GO:0097216">
    <property type="term" value="F:guanosine tetraphosphate binding"/>
    <property type="evidence" value="ECO:0007669"/>
    <property type="project" value="UniProtKB-ARBA"/>
</dbReference>
<dbReference type="GO" id="GO:0003743">
    <property type="term" value="F:translation initiation factor activity"/>
    <property type="evidence" value="ECO:0007669"/>
    <property type="project" value="UniProtKB-UniRule"/>
</dbReference>
<dbReference type="CDD" id="cd01887">
    <property type="entry name" value="IF2_eIF5B"/>
    <property type="match status" value="1"/>
</dbReference>
<dbReference type="CDD" id="cd03702">
    <property type="entry name" value="IF2_mtIF2_II"/>
    <property type="match status" value="1"/>
</dbReference>
<dbReference type="CDD" id="cd03692">
    <property type="entry name" value="mtIF2_IVc"/>
    <property type="match status" value="1"/>
</dbReference>
<dbReference type="FunFam" id="2.40.30.10:FF:000007">
    <property type="entry name" value="Translation initiation factor IF-2"/>
    <property type="match status" value="1"/>
</dbReference>
<dbReference type="FunFam" id="2.40.30.10:FF:000008">
    <property type="entry name" value="Translation initiation factor IF-2"/>
    <property type="match status" value="1"/>
</dbReference>
<dbReference type="FunFam" id="3.40.50.10050:FF:000001">
    <property type="entry name" value="Translation initiation factor IF-2"/>
    <property type="match status" value="1"/>
</dbReference>
<dbReference type="FunFam" id="3.40.50.300:FF:000019">
    <property type="entry name" value="Translation initiation factor IF-2"/>
    <property type="match status" value="1"/>
</dbReference>
<dbReference type="Gene3D" id="3.40.50.300">
    <property type="entry name" value="P-loop containing nucleotide triphosphate hydrolases"/>
    <property type="match status" value="1"/>
</dbReference>
<dbReference type="Gene3D" id="2.40.30.10">
    <property type="entry name" value="Translation factors"/>
    <property type="match status" value="2"/>
</dbReference>
<dbReference type="Gene3D" id="3.40.50.10050">
    <property type="entry name" value="Translation initiation factor IF- 2, domain 3"/>
    <property type="match status" value="1"/>
</dbReference>
<dbReference type="HAMAP" id="MF_00100_B">
    <property type="entry name" value="IF_2_B"/>
    <property type="match status" value="1"/>
</dbReference>
<dbReference type="InterPro" id="IPR053905">
    <property type="entry name" value="EF-G-like_DII"/>
</dbReference>
<dbReference type="InterPro" id="IPR004161">
    <property type="entry name" value="EFTu-like_2"/>
</dbReference>
<dbReference type="InterPro" id="IPR013575">
    <property type="entry name" value="IF2_assoc_dom_bac"/>
</dbReference>
<dbReference type="InterPro" id="IPR044145">
    <property type="entry name" value="IF2_II"/>
</dbReference>
<dbReference type="InterPro" id="IPR006847">
    <property type="entry name" value="IF2_N"/>
</dbReference>
<dbReference type="InterPro" id="IPR027417">
    <property type="entry name" value="P-loop_NTPase"/>
</dbReference>
<dbReference type="InterPro" id="IPR005225">
    <property type="entry name" value="Small_GTP-bd"/>
</dbReference>
<dbReference type="InterPro" id="IPR000795">
    <property type="entry name" value="T_Tr_GTP-bd_dom"/>
</dbReference>
<dbReference type="InterPro" id="IPR000178">
    <property type="entry name" value="TF_IF2_bacterial-like"/>
</dbReference>
<dbReference type="InterPro" id="IPR015760">
    <property type="entry name" value="TIF_IF2"/>
</dbReference>
<dbReference type="InterPro" id="IPR023115">
    <property type="entry name" value="TIF_IF2_dom3"/>
</dbReference>
<dbReference type="InterPro" id="IPR036925">
    <property type="entry name" value="TIF_IF2_dom3_sf"/>
</dbReference>
<dbReference type="InterPro" id="IPR009000">
    <property type="entry name" value="Transl_B-barrel_sf"/>
</dbReference>
<dbReference type="NCBIfam" id="TIGR00487">
    <property type="entry name" value="IF-2"/>
    <property type="match status" value="1"/>
</dbReference>
<dbReference type="NCBIfam" id="TIGR00231">
    <property type="entry name" value="small_GTP"/>
    <property type="match status" value="1"/>
</dbReference>
<dbReference type="PANTHER" id="PTHR43381:SF5">
    <property type="entry name" value="TR-TYPE G DOMAIN-CONTAINING PROTEIN"/>
    <property type="match status" value="1"/>
</dbReference>
<dbReference type="PANTHER" id="PTHR43381">
    <property type="entry name" value="TRANSLATION INITIATION FACTOR IF-2-RELATED"/>
    <property type="match status" value="1"/>
</dbReference>
<dbReference type="Pfam" id="PF22042">
    <property type="entry name" value="EF-G_D2"/>
    <property type="match status" value="1"/>
</dbReference>
<dbReference type="Pfam" id="PF00009">
    <property type="entry name" value="GTP_EFTU"/>
    <property type="match status" value="1"/>
</dbReference>
<dbReference type="Pfam" id="PF03144">
    <property type="entry name" value="GTP_EFTU_D2"/>
    <property type="match status" value="1"/>
</dbReference>
<dbReference type="Pfam" id="PF11987">
    <property type="entry name" value="IF-2"/>
    <property type="match status" value="1"/>
</dbReference>
<dbReference type="Pfam" id="PF08364">
    <property type="entry name" value="IF2_assoc"/>
    <property type="match status" value="1"/>
</dbReference>
<dbReference type="Pfam" id="PF04760">
    <property type="entry name" value="IF2_N"/>
    <property type="match status" value="1"/>
</dbReference>
<dbReference type="SUPFAM" id="SSF52156">
    <property type="entry name" value="Initiation factor IF2/eIF5b, domain 3"/>
    <property type="match status" value="1"/>
</dbReference>
<dbReference type="SUPFAM" id="SSF52540">
    <property type="entry name" value="P-loop containing nucleoside triphosphate hydrolases"/>
    <property type="match status" value="1"/>
</dbReference>
<dbReference type="SUPFAM" id="SSF50447">
    <property type="entry name" value="Translation proteins"/>
    <property type="match status" value="2"/>
</dbReference>
<dbReference type="PROSITE" id="PS51722">
    <property type="entry name" value="G_TR_2"/>
    <property type="match status" value="1"/>
</dbReference>
<dbReference type="PROSITE" id="PS01176">
    <property type="entry name" value="IF2"/>
    <property type="match status" value="1"/>
</dbReference>
<accession>A6VNE0</accession>
<proteinExistence type="inferred from homology"/>
<evidence type="ECO:0000250" key="1"/>
<evidence type="ECO:0000255" key="2">
    <source>
        <dbReference type="HAMAP-Rule" id="MF_00100"/>
    </source>
</evidence>
<evidence type="ECO:0000256" key="3">
    <source>
        <dbReference type="SAM" id="MobiDB-lite"/>
    </source>
</evidence>
<comment type="function">
    <text evidence="2">One of the essential components for the initiation of protein synthesis. Protects formylmethionyl-tRNA from spontaneous hydrolysis and promotes its binding to the 30S ribosomal subunits. Also involved in the hydrolysis of GTP during the formation of the 70S ribosomal complex.</text>
</comment>
<comment type="subcellular location">
    <subcellularLocation>
        <location evidence="2">Cytoplasm</location>
    </subcellularLocation>
</comment>
<comment type="similarity">
    <text evidence="2">Belongs to the TRAFAC class translation factor GTPase superfamily. Classic translation factor GTPase family. IF-2 subfamily.</text>
</comment>
<feature type="chain" id="PRO_1000071285" description="Translation initiation factor IF-2">
    <location>
        <begin position="1"/>
        <end position="837"/>
    </location>
</feature>
<feature type="domain" description="tr-type G">
    <location>
        <begin position="337"/>
        <end position="506"/>
    </location>
</feature>
<feature type="region of interest" description="Disordered" evidence="3">
    <location>
        <begin position="1"/>
        <end position="44"/>
    </location>
</feature>
<feature type="region of interest" description="Disordered" evidence="3">
    <location>
        <begin position="62"/>
        <end position="251"/>
    </location>
</feature>
<feature type="region of interest" description="G1" evidence="1">
    <location>
        <begin position="346"/>
        <end position="353"/>
    </location>
</feature>
<feature type="region of interest" description="G2" evidence="1">
    <location>
        <begin position="371"/>
        <end position="375"/>
    </location>
</feature>
<feature type="region of interest" description="G3" evidence="1">
    <location>
        <begin position="392"/>
        <end position="395"/>
    </location>
</feature>
<feature type="region of interest" description="G4" evidence="1">
    <location>
        <begin position="446"/>
        <end position="449"/>
    </location>
</feature>
<feature type="region of interest" description="G5" evidence="1">
    <location>
        <begin position="482"/>
        <end position="484"/>
    </location>
</feature>
<feature type="compositionally biased region" description="Basic and acidic residues" evidence="3">
    <location>
        <begin position="62"/>
        <end position="102"/>
    </location>
</feature>
<feature type="compositionally biased region" description="Basic and acidic residues" evidence="3">
    <location>
        <begin position="111"/>
        <end position="165"/>
    </location>
</feature>
<feature type="compositionally biased region" description="Basic residues" evidence="3">
    <location>
        <begin position="189"/>
        <end position="205"/>
    </location>
</feature>
<feature type="compositionally biased region" description="Basic and acidic residues" evidence="3">
    <location>
        <begin position="206"/>
        <end position="229"/>
    </location>
</feature>
<feature type="compositionally biased region" description="Polar residues" evidence="3">
    <location>
        <begin position="242"/>
        <end position="251"/>
    </location>
</feature>
<feature type="binding site" evidence="2">
    <location>
        <begin position="346"/>
        <end position="353"/>
    </location>
    <ligand>
        <name>GTP</name>
        <dbReference type="ChEBI" id="CHEBI:37565"/>
    </ligand>
</feature>
<feature type="binding site" evidence="2">
    <location>
        <begin position="392"/>
        <end position="396"/>
    </location>
    <ligand>
        <name>GTP</name>
        <dbReference type="ChEBI" id="CHEBI:37565"/>
    </ligand>
</feature>
<feature type="binding site" evidence="2">
    <location>
        <begin position="446"/>
        <end position="449"/>
    </location>
    <ligand>
        <name>GTP</name>
        <dbReference type="ChEBI" id="CHEBI:37565"/>
    </ligand>
</feature>
<reference key="1">
    <citation type="journal article" date="2010" name="BMC Genomics">
        <title>A genomic perspective on the potential of Actinobacillus succinogenes for industrial succinate production.</title>
        <authorList>
            <person name="McKinlay J.B."/>
            <person name="Laivenieks M."/>
            <person name="Schindler B.D."/>
            <person name="McKinlay A.A."/>
            <person name="Siddaramappa S."/>
            <person name="Challacombe J.F."/>
            <person name="Lowry S.R."/>
            <person name="Clum A."/>
            <person name="Lapidus A.L."/>
            <person name="Burkhart K.B."/>
            <person name="Harkins V."/>
            <person name="Vieille C."/>
        </authorList>
    </citation>
    <scope>NUCLEOTIDE SEQUENCE [LARGE SCALE GENOMIC DNA]</scope>
    <source>
        <strain>ATCC 55618 / DSM 22257 / CCUG 43843 / 130Z</strain>
    </source>
</reference>
<protein>
    <recommendedName>
        <fullName evidence="2">Translation initiation factor IF-2</fullName>
    </recommendedName>
</protein>
<keyword id="KW-0963">Cytoplasm</keyword>
<keyword id="KW-0342">GTP-binding</keyword>
<keyword id="KW-0396">Initiation factor</keyword>
<keyword id="KW-0547">Nucleotide-binding</keyword>
<keyword id="KW-0648">Protein biosynthesis</keyword>
<keyword id="KW-1185">Reference proteome</keyword>
<gene>
    <name evidence="2" type="primary">infB</name>
    <name type="ordered locus">Asuc_1121</name>
</gene>
<organism>
    <name type="scientific">Actinobacillus succinogenes (strain ATCC 55618 / DSM 22257 / CCUG 43843 / 130Z)</name>
    <dbReference type="NCBI Taxonomy" id="339671"/>
    <lineage>
        <taxon>Bacteria</taxon>
        <taxon>Pseudomonadati</taxon>
        <taxon>Pseudomonadota</taxon>
        <taxon>Gammaproteobacteria</taxon>
        <taxon>Pasteurellales</taxon>
        <taxon>Pasteurellaceae</taxon>
        <taxon>Actinobacillus</taxon>
    </lineage>
</organism>